<organism>
    <name type="scientific">Acetabularia acetabulum</name>
    <name type="common">Mermaid's wine glass</name>
    <name type="synonym">Acetabularia mediterranea</name>
    <dbReference type="NCBI Taxonomy" id="35845"/>
    <lineage>
        <taxon>Eukaryota</taxon>
        <taxon>Viridiplantae</taxon>
        <taxon>Chlorophyta</taxon>
        <taxon>Ulvophyceae</taxon>
        <taxon>TCBD clade</taxon>
        <taxon>Dasycladales</taxon>
        <taxon>Polyphysaceae</taxon>
        <taxon>Acetabularia</taxon>
    </lineage>
</organism>
<sequence length="182" mass="20659">MASIMMNKSVVLSKECAKPLATPKVTLNKRGFATTIATKNREMMVWQPFNNKMFETFSFLPPLTDEQISKQVDYILTNSWTPCLEFAASDQAYAGNENCIRMGPVASTYQDNRYWTMWKLPMFGCTDGSQVLSEIQACTKAFPDAYIRLVCFDANRQVQISGFLVHRPPSATDYRLPADRQV</sequence>
<evidence type="ECO:0000250" key="1"/>
<evidence type="ECO:0000255" key="2">
    <source>
        <dbReference type="HAMAP-Rule" id="MF_00860"/>
    </source>
</evidence>
<name>RBS1_ACEAT</name>
<dbReference type="EMBL" id="X51811">
    <property type="protein sequence ID" value="CAA36108.1"/>
    <property type="molecule type" value="mRNA"/>
</dbReference>
<dbReference type="PIR" id="S05349">
    <property type="entry name" value="RKJK1M"/>
</dbReference>
<dbReference type="SMR" id="P16134"/>
<dbReference type="GO" id="GO:0009507">
    <property type="term" value="C:chloroplast"/>
    <property type="evidence" value="ECO:0007669"/>
    <property type="project" value="UniProtKB-SubCell"/>
</dbReference>
<dbReference type="GO" id="GO:0004497">
    <property type="term" value="F:monooxygenase activity"/>
    <property type="evidence" value="ECO:0007669"/>
    <property type="project" value="UniProtKB-KW"/>
</dbReference>
<dbReference type="GO" id="GO:0016984">
    <property type="term" value="F:ribulose-bisphosphate carboxylase activity"/>
    <property type="evidence" value="ECO:0007669"/>
    <property type="project" value="UniProtKB-UniRule"/>
</dbReference>
<dbReference type="GO" id="GO:0009853">
    <property type="term" value="P:photorespiration"/>
    <property type="evidence" value="ECO:0007669"/>
    <property type="project" value="UniProtKB-KW"/>
</dbReference>
<dbReference type="GO" id="GO:0019253">
    <property type="term" value="P:reductive pentose-phosphate cycle"/>
    <property type="evidence" value="ECO:0007669"/>
    <property type="project" value="UniProtKB-UniRule"/>
</dbReference>
<dbReference type="CDD" id="cd03527">
    <property type="entry name" value="RuBisCO_small"/>
    <property type="match status" value="1"/>
</dbReference>
<dbReference type="FunFam" id="3.30.190.10:FF:000001">
    <property type="entry name" value="Ribulose bisphosphate carboxylase small chain, chloroplastic"/>
    <property type="match status" value="1"/>
</dbReference>
<dbReference type="Gene3D" id="3.30.190.10">
    <property type="entry name" value="Ribulose bisphosphate carboxylase, small subunit"/>
    <property type="match status" value="1"/>
</dbReference>
<dbReference type="HAMAP" id="MF_00859">
    <property type="entry name" value="RuBisCO_S_bact"/>
    <property type="match status" value="1"/>
</dbReference>
<dbReference type="InterPro" id="IPR024681">
    <property type="entry name" value="RuBisCO_ssu"/>
</dbReference>
<dbReference type="InterPro" id="IPR000894">
    <property type="entry name" value="RuBisCO_ssu_dom"/>
</dbReference>
<dbReference type="InterPro" id="IPR036385">
    <property type="entry name" value="RuBisCO_ssu_sf"/>
</dbReference>
<dbReference type="PANTHER" id="PTHR31262">
    <property type="entry name" value="RIBULOSE BISPHOSPHATE CARBOXYLASE SMALL CHAIN 1, CHLOROPLASTIC"/>
    <property type="match status" value="1"/>
</dbReference>
<dbReference type="PANTHER" id="PTHR31262:SF0">
    <property type="entry name" value="RIBULOSE BISPHOSPHATE CARBOXYLASE SMALL SUBUNIT, CHLOROPLASTIC 1"/>
    <property type="match status" value="1"/>
</dbReference>
<dbReference type="Pfam" id="PF00101">
    <property type="entry name" value="RuBisCO_small"/>
    <property type="match status" value="1"/>
</dbReference>
<dbReference type="PRINTS" id="PR00152">
    <property type="entry name" value="RUBISCOSMALL"/>
</dbReference>
<dbReference type="SMART" id="SM00961">
    <property type="entry name" value="RuBisCO_small"/>
    <property type="match status" value="1"/>
</dbReference>
<dbReference type="SUPFAM" id="SSF55239">
    <property type="entry name" value="RuBisCO, small subunit"/>
    <property type="match status" value="1"/>
</dbReference>
<accession>P16134</accession>
<keyword id="KW-0113">Calvin cycle</keyword>
<keyword id="KW-0120">Carbon dioxide fixation</keyword>
<keyword id="KW-0150">Chloroplast</keyword>
<keyword id="KW-0456">Lyase</keyword>
<keyword id="KW-0503">Monooxygenase</keyword>
<keyword id="KW-0560">Oxidoreductase</keyword>
<keyword id="KW-0601">Photorespiration</keyword>
<keyword id="KW-0602">Photosynthesis</keyword>
<keyword id="KW-0934">Plastid</keyword>
<keyword id="KW-0809">Transit peptide</keyword>
<protein>
    <recommendedName>
        <fullName evidence="2">Ribulose bisphosphate carboxylase small subunit, chloroplastic 1</fullName>
        <shortName evidence="2">RuBisCO small subunit 1</shortName>
    </recommendedName>
</protein>
<comment type="function">
    <text evidence="2">RuBisCO catalyzes two reactions: the carboxylation of D-ribulose 1,5-bisphosphate, the primary event in carbon dioxide fixation, as well as the oxidative fragmentation of the pentose substrate. Both reactions occur simultaneously and in competition at the same active site. Although the small subunit is not catalytic it is essential for maximal activity.</text>
</comment>
<comment type="subunit">
    <text evidence="2">Heterohexadecamer of 8 large and 8 small subunits.</text>
</comment>
<comment type="subcellular location">
    <subcellularLocation>
        <location evidence="2">Plastid</location>
        <location evidence="2">Chloroplast</location>
    </subcellularLocation>
</comment>
<comment type="miscellaneous">
    <text evidence="2">The basic functional RuBisCO is composed of a large chain homodimer in a 'head-to-tail' conformation. In form I RuBisCO this homodimer is arranged in a barrel-like tetramer with the small subunits forming a tetrameric 'cap' on each end of the 'barrel'.</text>
</comment>
<comment type="similarity">
    <text evidence="2">Belongs to the RuBisCO small chain family.</text>
</comment>
<feature type="transit peptide" description="Chloroplast" evidence="1">
    <location>
        <begin position="1"/>
        <end position="42"/>
    </location>
</feature>
<feature type="chain" id="PRO_0000031454" description="Ribulose bisphosphate carboxylase small subunit, chloroplastic 1">
    <location>
        <begin position="43"/>
        <end position="182"/>
    </location>
</feature>
<gene>
    <name evidence="2" type="primary">RBCS1</name>
    <name type="synonym">RBCS-1</name>
</gene>
<reference key="1">
    <citation type="journal article" date="1989" name="Mol. Gen. Genet.">
        <title>Strong homology between the small subunit of ribulose-1,5-bisphosphate carboxylase/oxygenase of two species of Acetabularia and the occurrence of unusual codon usage.</title>
        <authorList>
            <person name="Schneider S.U."/>
            <person name="Leible M.B."/>
            <person name="Yang X.P."/>
        </authorList>
    </citation>
    <scope>NUCLEOTIDE SEQUENCE [MRNA]</scope>
    <source>
        <strain>17</strain>
    </source>
</reference>
<proteinExistence type="evidence at transcript level"/>